<gene>
    <name evidence="1" type="primary">argR</name>
    <name type="ordered locus">ACP_2996</name>
</gene>
<sequence>MSKHERHNAIRELIAQRPIASQDELRRKLVRRGFDVTQATLSRDIHELRIYKGPGGYALPNGNGHDEQDDLPDVDEVMSSFGLKVKQAQNQLVLVTTAGSAQPVALAIDHEDWPEVVGTLAGDDTVLIICPDQKRATVLAERLEKIIG</sequence>
<organism>
    <name type="scientific">Acidobacterium capsulatum (strain ATCC 51196 / DSM 11244 / BCRC 80197 / JCM 7670 / NBRC 15755 / NCIMB 13165 / 161)</name>
    <dbReference type="NCBI Taxonomy" id="240015"/>
    <lineage>
        <taxon>Bacteria</taxon>
        <taxon>Pseudomonadati</taxon>
        <taxon>Acidobacteriota</taxon>
        <taxon>Terriglobia</taxon>
        <taxon>Terriglobales</taxon>
        <taxon>Acidobacteriaceae</taxon>
        <taxon>Acidobacterium</taxon>
    </lineage>
</organism>
<reference key="1">
    <citation type="journal article" date="2009" name="Appl. Environ. Microbiol.">
        <title>Three genomes from the phylum Acidobacteria provide insight into the lifestyles of these microorganisms in soils.</title>
        <authorList>
            <person name="Ward N.L."/>
            <person name="Challacombe J.F."/>
            <person name="Janssen P.H."/>
            <person name="Henrissat B."/>
            <person name="Coutinho P.M."/>
            <person name="Wu M."/>
            <person name="Xie G."/>
            <person name="Haft D.H."/>
            <person name="Sait M."/>
            <person name="Badger J."/>
            <person name="Barabote R.D."/>
            <person name="Bradley B."/>
            <person name="Brettin T.S."/>
            <person name="Brinkac L.M."/>
            <person name="Bruce D."/>
            <person name="Creasy T."/>
            <person name="Daugherty S.C."/>
            <person name="Davidsen T.M."/>
            <person name="DeBoy R.T."/>
            <person name="Detter J.C."/>
            <person name="Dodson R.J."/>
            <person name="Durkin A.S."/>
            <person name="Ganapathy A."/>
            <person name="Gwinn-Giglio M."/>
            <person name="Han C.S."/>
            <person name="Khouri H."/>
            <person name="Kiss H."/>
            <person name="Kothari S.P."/>
            <person name="Madupu R."/>
            <person name="Nelson K.E."/>
            <person name="Nelson W.C."/>
            <person name="Paulsen I."/>
            <person name="Penn K."/>
            <person name="Ren Q."/>
            <person name="Rosovitz M.J."/>
            <person name="Selengut J.D."/>
            <person name="Shrivastava S."/>
            <person name="Sullivan S.A."/>
            <person name="Tapia R."/>
            <person name="Thompson L.S."/>
            <person name="Watkins K.L."/>
            <person name="Yang Q."/>
            <person name="Yu C."/>
            <person name="Zafar N."/>
            <person name="Zhou L."/>
            <person name="Kuske C.R."/>
        </authorList>
    </citation>
    <scope>NUCLEOTIDE SEQUENCE [LARGE SCALE GENOMIC DNA]</scope>
    <source>
        <strain>ATCC 51196 / DSM 11244 / BCRC 80197 / JCM 7670 / NBRC 15755 / NCIMB 13165 / 161</strain>
    </source>
</reference>
<accession>C1F4F3</accession>
<keyword id="KW-0028">Amino-acid biosynthesis</keyword>
<keyword id="KW-0055">Arginine biosynthesis</keyword>
<keyword id="KW-0963">Cytoplasm</keyword>
<keyword id="KW-0238">DNA-binding</keyword>
<keyword id="KW-1185">Reference proteome</keyword>
<keyword id="KW-0678">Repressor</keyword>
<keyword id="KW-0804">Transcription</keyword>
<keyword id="KW-0805">Transcription regulation</keyword>
<evidence type="ECO:0000255" key="1">
    <source>
        <dbReference type="HAMAP-Rule" id="MF_00173"/>
    </source>
</evidence>
<dbReference type="EMBL" id="CP001472">
    <property type="protein sequence ID" value="ACO33688.1"/>
    <property type="molecule type" value="Genomic_DNA"/>
</dbReference>
<dbReference type="RefSeq" id="WP_015898045.1">
    <property type="nucleotide sequence ID" value="NC_012483.1"/>
</dbReference>
<dbReference type="SMR" id="C1F4F3"/>
<dbReference type="FunCoup" id="C1F4F3">
    <property type="interactions" value="77"/>
</dbReference>
<dbReference type="STRING" id="240015.ACP_2996"/>
<dbReference type="KEGG" id="aca:ACP_2996"/>
<dbReference type="eggNOG" id="COG1438">
    <property type="taxonomic scope" value="Bacteria"/>
</dbReference>
<dbReference type="HOGENOM" id="CLU_097103_3_0_0"/>
<dbReference type="InParanoid" id="C1F4F3"/>
<dbReference type="OrthoDB" id="9807089at2"/>
<dbReference type="UniPathway" id="UPA00068"/>
<dbReference type="Proteomes" id="UP000002207">
    <property type="component" value="Chromosome"/>
</dbReference>
<dbReference type="GO" id="GO:0005737">
    <property type="term" value="C:cytoplasm"/>
    <property type="evidence" value="ECO:0007669"/>
    <property type="project" value="UniProtKB-SubCell"/>
</dbReference>
<dbReference type="GO" id="GO:0034618">
    <property type="term" value="F:arginine binding"/>
    <property type="evidence" value="ECO:0007669"/>
    <property type="project" value="InterPro"/>
</dbReference>
<dbReference type="GO" id="GO:0003677">
    <property type="term" value="F:DNA binding"/>
    <property type="evidence" value="ECO:0007669"/>
    <property type="project" value="UniProtKB-KW"/>
</dbReference>
<dbReference type="GO" id="GO:0003700">
    <property type="term" value="F:DNA-binding transcription factor activity"/>
    <property type="evidence" value="ECO:0007669"/>
    <property type="project" value="UniProtKB-UniRule"/>
</dbReference>
<dbReference type="GO" id="GO:0006526">
    <property type="term" value="P:L-arginine biosynthetic process"/>
    <property type="evidence" value="ECO:0007669"/>
    <property type="project" value="UniProtKB-UniPathway"/>
</dbReference>
<dbReference type="GO" id="GO:0051259">
    <property type="term" value="P:protein complex oligomerization"/>
    <property type="evidence" value="ECO:0007669"/>
    <property type="project" value="InterPro"/>
</dbReference>
<dbReference type="GO" id="GO:1900079">
    <property type="term" value="P:regulation of arginine biosynthetic process"/>
    <property type="evidence" value="ECO:0007669"/>
    <property type="project" value="UniProtKB-UniRule"/>
</dbReference>
<dbReference type="Gene3D" id="3.30.1360.40">
    <property type="match status" value="1"/>
</dbReference>
<dbReference type="Gene3D" id="1.10.10.10">
    <property type="entry name" value="Winged helix-like DNA-binding domain superfamily/Winged helix DNA-binding domain"/>
    <property type="match status" value="1"/>
</dbReference>
<dbReference type="HAMAP" id="MF_00173">
    <property type="entry name" value="Arg_repressor"/>
    <property type="match status" value="1"/>
</dbReference>
<dbReference type="InterPro" id="IPR001669">
    <property type="entry name" value="Arg_repress"/>
</dbReference>
<dbReference type="InterPro" id="IPR020899">
    <property type="entry name" value="Arg_repress_C"/>
</dbReference>
<dbReference type="InterPro" id="IPR036251">
    <property type="entry name" value="Arg_repress_C_sf"/>
</dbReference>
<dbReference type="InterPro" id="IPR020900">
    <property type="entry name" value="Arg_repress_DNA-bd"/>
</dbReference>
<dbReference type="InterPro" id="IPR036388">
    <property type="entry name" value="WH-like_DNA-bd_sf"/>
</dbReference>
<dbReference type="InterPro" id="IPR036390">
    <property type="entry name" value="WH_DNA-bd_sf"/>
</dbReference>
<dbReference type="PANTHER" id="PTHR34471">
    <property type="entry name" value="ARGININE REPRESSOR"/>
    <property type="match status" value="1"/>
</dbReference>
<dbReference type="PANTHER" id="PTHR34471:SF1">
    <property type="entry name" value="ARGININE REPRESSOR"/>
    <property type="match status" value="1"/>
</dbReference>
<dbReference type="Pfam" id="PF01316">
    <property type="entry name" value="Arg_repressor"/>
    <property type="match status" value="1"/>
</dbReference>
<dbReference type="Pfam" id="PF02863">
    <property type="entry name" value="Arg_repressor_C"/>
    <property type="match status" value="1"/>
</dbReference>
<dbReference type="PRINTS" id="PR01467">
    <property type="entry name" value="ARGREPRESSOR"/>
</dbReference>
<dbReference type="SUPFAM" id="SSF55252">
    <property type="entry name" value="C-terminal domain of arginine repressor"/>
    <property type="match status" value="1"/>
</dbReference>
<dbReference type="SUPFAM" id="SSF46785">
    <property type="entry name" value="Winged helix' DNA-binding domain"/>
    <property type="match status" value="1"/>
</dbReference>
<protein>
    <recommendedName>
        <fullName evidence="1">Arginine repressor</fullName>
    </recommendedName>
</protein>
<feature type="chain" id="PRO_1000123780" description="Arginine repressor">
    <location>
        <begin position="1"/>
        <end position="148"/>
    </location>
</feature>
<name>ARGR_ACIC5</name>
<proteinExistence type="inferred from homology"/>
<comment type="function">
    <text evidence="1">Regulates arginine biosynthesis genes.</text>
</comment>
<comment type="pathway">
    <text>Amino-acid biosynthesis; L-arginine biosynthesis [regulation].</text>
</comment>
<comment type="subcellular location">
    <subcellularLocation>
        <location evidence="1">Cytoplasm</location>
    </subcellularLocation>
</comment>
<comment type="similarity">
    <text evidence="1">Belongs to the ArgR family.</text>
</comment>